<name>EAP2_EUCUL</name>
<feature type="chain" id="PRO_0000124817" description="Antifungal peptide 2">
    <location>
        <begin position="1"/>
        <end position="41"/>
    </location>
</feature>
<feature type="domain" description="Chitin-binding type-1" evidence="1">
    <location>
        <begin position="4"/>
        <end position="41"/>
    </location>
</feature>
<feature type="modified residue" description="Pyrrolidone carboxylic acid" evidence="2">
    <location>
        <position position="1"/>
    </location>
</feature>
<feature type="disulfide bond">
    <location>
        <begin position="3"/>
        <end position="17"/>
    </location>
</feature>
<feature type="disulfide bond">
    <location>
        <begin position="7"/>
        <end position="37"/>
    </location>
</feature>
<feature type="disulfide bond">
    <location>
        <begin position="11"/>
        <end position="23"/>
    </location>
</feature>
<feature type="disulfide bond">
    <location>
        <begin position="16"/>
        <end position="30"/>
    </location>
</feature>
<feature type="disulfide bond">
    <location>
        <begin position="35"/>
        <end position="39"/>
    </location>
</feature>
<feature type="helix" evidence="3">
    <location>
        <begin position="3"/>
        <end position="6"/>
    </location>
</feature>
<feature type="strand" evidence="4">
    <location>
        <begin position="8"/>
        <end position="11"/>
    </location>
</feature>
<feature type="strand" evidence="3">
    <location>
        <begin position="16"/>
        <end position="18"/>
    </location>
</feature>
<feature type="turn" evidence="4">
    <location>
        <begin position="19"/>
        <end position="21"/>
    </location>
</feature>
<feature type="strand" evidence="4">
    <location>
        <begin position="22"/>
        <end position="24"/>
    </location>
</feature>
<feature type="helix" evidence="3">
    <location>
        <begin position="27"/>
        <end position="30"/>
    </location>
</feature>
<feature type="turn" evidence="3">
    <location>
        <begin position="32"/>
        <end position="34"/>
    </location>
</feature>
<feature type="strand" evidence="3">
    <location>
        <begin position="35"/>
        <end position="37"/>
    </location>
</feature>
<protein>
    <recommendedName>
        <fullName>Antifungal peptide 2</fullName>
    </recommendedName>
    <alternativeName>
        <fullName>EAFP2</fullName>
    </alternativeName>
</protein>
<comment type="function">
    <text evidence="2">Has antifungal activity against P.infestans, A.lycopersici, V.dahliae, G.zeae, A.nicotianae, F.moniliforme, F.oxysporum and C.gossypii.</text>
</comment>
<comment type="subunit">
    <text evidence="2">Monomer.</text>
</comment>
<comment type="mass spectrometry"/>
<sequence>QTCASRCPRPCNAGLCCSIYGYCGSGAAYCGAGNCRCQCRG</sequence>
<reference key="1">
    <citation type="journal article" date="2002" name="FEBS Lett.">
        <title>Two novel antifungal peptides distinct with a five-disulfide motif from the bark of Eucommia ulmoides Oliv.</title>
        <authorList>
            <person name="Huang R.-H."/>
            <person name="Xiang Y."/>
            <person name="Liu X.-Z."/>
            <person name="Zhang Y."/>
            <person name="Hu Z."/>
            <person name="Wang D.-C."/>
        </authorList>
    </citation>
    <scope>PROTEIN SEQUENCE</scope>
    <scope>FUNCTION</scope>
    <scope>SUBUNIT</scope>
    <scope>MASS SPECTROMETRY</scope>
    <scope>DISULFIDE BONDS</scope>
    <scope>PYROGLUTAMATE FORMATION AT GLN-1</scope>
    <source>
        <tissue>Bark</tissue>
    </source>
</reference>
<reference key="2">
    <citation type="journal article" date="2004" name="Biochemistry">
        <title>Solution structure of Eucommia antifungal peptide: a novel structural model distinct with a five-disulfide motif.</title>
        <authorList>
            <person name="Huang R.H."/>
            <person name="Xiang Y."/>
            <person name="Tu G.Z."/>
            <person name="Zhang Y."/>
            <person name="Wang D.C."/>
        </authorList>
    </citation>
    <scope>STRUCTURE BY NMR</scope>
    <scope>DISULFIDE BONDS</scope>
</reference>
<reference key="3">
    <citation type="journal article" date="2004" name="J. Struct. Biol.">
        <title>Crystal structure of a novel antifungal protein distinct with five disulfide bridges from Eucommia ulmoides Oliver at an atomic resolution.</title>
        <authorList>
            <person name="Xiang Y."/>
            <person name="Huang R.H."/>
            <person name="Liu X.Z."/>
            <person name="Zhang Y."/>
            <person name="Wang D.C."/>
        </authorList>
    </citation>
    <scope>X-RAY CRYSTALLOGRAPHY (0.84 ANGSTROMS)</scope>
    <scope>DISULFIDE BONDS</scope>
</reference>
<organism>
    <name type="scientific">Eucommia ulmoides</name>
    <name type="common">Hardy rubber tree</name>
    <dbReference type="NCBI Taxonomy" id="4392"/>
    <lineage>
        <taxon>Eukaryota</taxon>
        <taxon>Viridiplantae</taxon>
        <taxon>Streptophyta</taxon>
        <taxon>Embryophyta</taxon>
        <taxon>Tracheophyta</taxon>
        <taxon>Spermatophyta</taxon>
        <taxon>Magnoliopsida</taxon>
        <taxon>eudicotyledons</taxon>
        <taxon>Gunneridae</taxon>
        <taxon>Pentapetalae</taxon>
        <taxon>asterids</taxon>
        <taxon>lamiids</taxon>
        <taxon>Garryales</taxon>
        <taxon>Eucommiaceae</taxon>
        <taxon>Eucommia</taxon>
    </lineage>
</organism>
<dbReference type="PDB" id="1P9G">
    <property type="method" value="X-ray"/>
    <property type="resolution" value="0.84 A"/>
    <property type="chains" value="A=2-41"/>
</dbReference>
<dbReference type="PDB" id="1P9Z">
    <property type="method" value="NMR"/>
    <property type="chains" value="A=2-41"/>
</dbReference>
<dbReference type="PDBsum" id="1P9G"/>
<dbReference type="PDBsum" id="1P9Z"/>
<dbReference type="BMRB" id="P83597"/>
<dbReference type="SMR" id="P83597"/>
<dbReference type="CAZy" id="CBM18">
    <property type="family name" value="Carbohydrate-Binding Module Family 18"/>
</dbReference>
<dbReference type="EvolutionaryTrace" id="P83597"/>
<dbReference type="GO" id="GO:0008061">
    <property type="term" value="F:chitin binding"/>
    <property type="evidence" value="ECO:0007669"/>
    <property type="project" value="UniProtKB-KW"/>
</dbReference>
<dbReference type="GO" id="GO:0050832">
    <property type="term" value="P:defense response to fungus"/>
    <property type="evidence" value="ECO:0007669"/>
    <property type="project" value="UniProtKB-KW"/>
</dbReference>
<dbReference type="GO" id="GO:0031640">
    <property type="term" value="P:killing of cells of another organism"/>
    <property type="evidence" value="ECO:0007669"/>
    <property type="project" value="UniProtKB-KW"/>
</dbReference>
<dbReference type="CDD" id="cd00035">
    <property type="entry name" value="ChtBD1"/>
    <property type="match status" value="1"/>
</dbReference>
<dbReference type="Gene3D" id="3.30.60.10">
    <property type="entry name" value="Endochitinase-like"/>
    <property type="match status" value="1"/>
</dbReference>
<dbReference type="InterPro" id="IPR001002">
    <property type="entry name" value="Chitin-bd_1"/>
</dbReference>
<dbReference type="InterPro" id="IPR018371">
    <property type="entry name" value="Chitin-binding_1_CS"/>
</dbReference>
<dbReference type="InterPro" id="IPR036861">
    <property type="entry name" value="Endochitinase-like_sf"/>
</dbReference>
<dbReference type="SMART" id="SM00270">
    <property type="entry name" value="ChtBD1"/>
    <property type="match status" value="1"/>
</dbReference>
<dbReference type="SUPFAM" id="SSF57016">
    <property type="entry name" value="Plant lectins/antimicrobial peptides"/>
    <property type="match status" value="1"/>
</dbReference>
<dbReference type="PROSITE" id="PS00026">
    <property type="entry name" value="CHIT_BIND_I_1"/>
    <property type="match status" value="1"/>
</dbReference>
<dbReference type="PROSITE" id="PS50941">
    <property type="entry name" value="CHIT_BIND_I_2"/>
    <property type="match status" value="1"/>
</dbReference>
<proteinExistence type="evidence at protein level"/>
<keyword id="KW-0002">3D-structure</keyword>
<keyword id="KW-0929">Antimicrobial</keyword>
<keyword id="KW-0147">Chitin-binding</keyword>
<keyword id="KW-0903">Direct protein sequencing</keyword>
<keyword id="KW-1015">Disulfide bond</keyword>
<keyword id="KW-0295">Fungicide</keyword>
<keyword id="KW-0611">Plant defense</keyword>
<keyword id="KW-0873">Pyrrolidone carboxylic acid</keyword>
<evidence type="ECO:0000255" key="1">
    <source>
        <dbReference type="PROSITE-ProRule" id="PRU00261"/>
    </source>
</evidence>
<evidence type="ECO:0000269" key="2">
    <source>
    </source>
</evidence>
<evidence type="ECO:0007829" key="3">
    <source>
        <dbReference type="PDB" id="1P9G"/>
    </source>
</evidence>
<evidence type="ECO:0007829" key="4">
    <source>
        <dbReference type="PDB" id="1P9Z"/>
    </source>
</evidence>
<accession>P83597</accession>